<feature type="chain" id="PRO_1000165821" description="DNA-directed RNA polymerase subunit beta">
    <location>
        <begin position="1"/>
        <end position="1183"/>
    </location>
</feature>
<feature type="region of interest" description="Disordered" evidence="2">
    <location>
        <begin position="1155"/>
        <end position="1183"/>
    </location>
</feature>
<protein>
    <recommendedName>
        <fullName evidence="1">DNA-directed RNA polymerase subunit beta</fullName>
        <shortName evidence="1">RNAP subunit beta</shortName>
        <ecNumber evidence="1">2.7.7.6</ecNumber>
    </recommendedName>
    <alternativeName>
        <fullName evidence="1">RNA polymerase subunit beta</fullName>
    </alternativeName>
    <alternativeName>
        <fullName evidence="1">Transcriptase subunit beta</fullName>
    </alternativeName>
</protein>
<proteinExistence type="inferred from homology"/>
<accession>B9DKV0</accession>
<gene>
    <name evidence="1" type="primary">rpoB</name>
    <name type="ordered locus">Sca_0199</name>
</gene>
<comment type="function">
    <text evidence="1">DNA-dependent RNA polymerase catalyzes the transcription of DNA into RNA using the four ribonucleoside triphosphates as substrates.</text>
</comment>
<comment type="catalytic activity">
    <reaction evidence="1">
        <text>RNA(n) + a ribonucleoside 5'-triphosphate = RNA(n+1) + diphosphate</text>
        <dbReference type="Rhea" id="RHEA:21248"/>
        <dbReference type="Rhea" id="RHEA-COMP:14527"/>
        <dbReference type="Rhea" id="RHEA-COMP:17342"/>
        <dbReference type="ChEBI" id="CHEBI:33019"/>
        <dbReference type="ChEBI" id="CHEBI:61557"/>
        <dbReference type="ChEBI" id="CHEBI:140395"/>
        <dbReference type="EC" id="2.7.7.6"/>
    </reaction>
</comment>
<comment type="subunit">
    <text evidence="1">The RNAP catalytic core consists of 2 alpha, 1 beta, 1 beta' and 1 omega subunit. When a sigma factor is associated with the core the holoenzyme is formed, which can initiate transcription.</text>
</comment>
<comment type="similarity">
    <text evidence="1">Belongs to the RNA polymerase beta chain family.</text>
</comment>
<organism>
    <name type="scientific">Staphylococcus carnosus (strain TM300)</name>
    <dbReference type="NCBI Taxonomy" id="396513"/>
    <lineage>
        <taxon>Bacteria</taxon>
        <taxon>Bacillati</taxon>
        <taxon>Bacillota</taxon>
        <taxon>Bacilli</taxon>
        <taxon>Bacillales</taxon>
        <taxon>Staphylococcaceae</taxon>
        <taxon>Staphylococcus</taxon>
    </lineage>
</organism>
<sequence length="1183" mass="133212">MAGKFVQYGRHRKRRNYARISEVLELPNLIEIQTKSYDWFLKEGLLEMFRDISPIEDFTGNLSLEFVDYRLGEPKYDLEESKNRDATYAAPLRVKVRLINKETGEVKDQEVFMGDFPLMTDTGTFVINGAERVIVSQLVRSPSVYFNEKIDKNGRENYDATVIPNRGAWLEFETDAKDIVYVRIDRTRKLPLTVLLRALGYSTDQSIIDLLGDNEYLRNTLEKDSTENTEQALLEIYERLRPGEPPTVENAKSLLYSRFFDPKRYDLASVGRYKMNKKLHLKHRLFNQKLAEPIVNSDTGEIVAEEGTVLDRRKLDEIMDVLESNANIEVDELDDSIVNEPVEIQSIKVYVPNDEEGRTTTVIGNAFPDSEVKCITPADIVASMSYFFNLLHGIGQTDDIDHLGNRRLRSVGELLQNQFRIGLSRMERVVRERMSIQDTDSITPQQLINIRPVIASIKEFFGSSQLSQFMDQANPLAELTHKRRLSALGPGGLTRERAQMEVRDVHYSHYGRMCPIETPEGPNIGLINSLSSYARVNEFGFIETPYRKVDLETNTVTDQIDYLTADEEDSYVVAQANSRLDDEGHFISEEVVCRFRGNNTMMDRDKMDYMDVSPKQVVSAATACIPFLENDDSNRALMGANMQRQAVPLMNPESPFVGTGMEHATARDSGAAVINKHFGRVEHVESNEIKVRRIIEEDGQQYDGELDTYRLAKFKRSNSGTCYNQRPIVKDGDIVSQGEILADGPSMELGEMALGRNVVVGFMTWDGYNYEDAVIMSERLVKDDVYTSIHIEEYESEARDTKLGPEEITRDIPNVAESALKNLDERGIVYVGAEVKDGDILVGKVTPKGVTELTAEERLLHAIFGEKAREVRDTSLRVPHGAGGIVLDVKVFNREDGDDSLSPGVNQLVRVYIVQKRKIHVGDKMCGRHGNKGVISKIVPEEDMPYLPDGTPIDIMLNPLGVPSRMNIGQVLELHLGMAAKNLGIHVASPVFDGANDDDVWSTIEEAGMARDGKTVLYDGRTGEPFDNRISVGVMYMLKLAHMVDDKLHARSTGPYSLVTQQPLGGKAQFGGQRFGEMEVWALEAYGAAYTLQEILTYKSDDTVGRVKTYEAIVKGENISKPSVPESFRVLMKELQSLGLDVKVMDEDDKEIEMADVDEDDVNEHKVNIQQSSIPESQKETTD</sequence>
<keyword id="KW-0240">DNA-directed RNA polymerase</keyword>
<keyword id="KW-0548">Nucleotidyltransferase</keyword>
<keyword id="KW-1185">Reference proteome</keyword>
<keyword id="KW-0804">Transcription</keyword>
<keyword id="KW-0808">Transferase</keyword>
<evidence type="ECO:0000255" key="1">
    <source>
        <dbReference type="HAMAP-Rule" id="MF_01321"/>
    </source>
</evidence>
<evidence type="ECO:0000256" key="2">
    <source>
        <dbReference type="SAM" id="MobiDB-lite"/>
    </source>
</evidence>
<name>RPOB_STACT</name>
<reference key="1">
    <citation type="journal article" date="2009" name="Appl. Environ. Microbiol.">
        <title>Genome analysis of the meat starter culture bacterium Staphylococcus carnosus TM300.</title>
        <authorList>
            <person name="Rosenstein R."/>
            <person name="Nerz C."/>
            <person name="Biswas L."/>
            <person name="Resch A."/>
            <person name="Raddatz G."/>
            <person name="Schuster S.C."/>
            <person name="Goetz F."/>
        </authorList>
    </citation>
    <scope>NUCLEOTIDE SEQUENCE [LARGE SCALE GENOMIC DNA]</scope>
    <source>
        <strain>TM300</strain>
    </source>
</reference>
<dbReference type="EC" id="2.7.7.6" evidence="1"/>
<dbReference type="EMBL" id="AM295250">
    <property type="protein sequence ID" value="CAL27112.1"/>
    <property type="molecule type" value="Genomic_DNA"/>
</dbReference>
<dbReference type="RefSeq" id="WP_012664227.1">
    <property type="nucleotide sequence ID" value="NC_012121.1"/>
</dbReference>
<dbReference type="SMR" id="B9DKV0"/>
<dbReference type="GeneID" id="93795128"/>
<dbReference type="KEGG" id="sca:SCA_0199"/>
<dbReference type="eggNOG" id="COG0085">
    <property type="taxonomic scope" value="Bacteria"/>
</dbReference>
<dbReference type="HOGENOM" id="CLU_000524_4_1_9"/>
<dbReference type="OrthoDB" id="9803954at2"/>
<dbReference type="BioCyc" id="SCAR396513:SCA_RS01025-MONOMER"/>
<dbReference type="Proteomes" id="UP000000444">
    <property type="component" value="Chromosome"/>
</dbReference>
<dbReference type="GO" id="GO:0000428">
    <property type="term" value="C:DNA-directed RNA polymerase complex"/>
    <property type="evidence" value="ECO:0007669"/>
    <property type="project" value="UniProtKB-KW"/>
</dbReference>
<dbReference type="GO" id="GO:0003677">
    <property type="term" value="F:DNA binding"/>
    <property type="evidence" value="ECO:0007669"/>
    <property type="project" value="UniProtKB-UniRule"/>
</dbReference>
<dbReference type="GO" id="GO:0003899">
    <property type="term" value="F:DNA-directed RNA polymerase activity"/>
    <property type="evidence" value="ECO:0007669"/>
    <property type="project" value="UniProtKB-UniRule"/>
</dbReference>
<dbReference type="GO" id="GO:0032549">
    <property type="term" value="F:ribonucleoside binding"/>
    <property type="evidence" value="ECO:0007669"/>
    <property type="project" value="InterPro"/>
</dbReference>
<dbReference type="GO" id="GO:0006351">
    <property type="term" value="P:DNA-templated transcription"/>
    <property type="evidence" value="ECO:0007669"/>
    <property type="project" value="UniProtKB-UniRule"/>
</dbReference>
<dbReference type="CDD" id="cd00653">
    <property type="entry name" value="RNA_pol_B_RPB2"/>
    <property type="match status" value="1"/>
</dbReference>
<dbReference type="FunFam" id="3.90.1800.10:FF:000001">
    <property type="entry name" value="DNA-directed RNA polymerase subunit beta"/>
    <property type="match status" value="1"/>
</dbReference>
<dbReference type="Gene3D" id="2.40.50.100">
    <property type="match status" value="1"/>
</dbReference>
<dbReference type="Gene3D" id="2.40.50.150">
    <property type="match status" value="1"/>
</dbReference>
<dbReference type="Gene3D" id="3.90.1100.10">
    <property type="match status" value="2"/>
</dbReference>
<dbReference type="Gene3D" id="2.40.270.10">
    <property type="entry name" value="DNA-directed RNA polymerase, subunit 2, domain 6"/>
    <property type="match status" value="1"/>
</dbReference>
<dbReference type="Gene3D" id="3.90.1800.10">
    <property type="entry name" value="RNA polymerase alpha subunit dimerisation domain"/>
    <property type="match status" value="1"/>
</dbReference>
<dbReference type="Gene3D" id="3.90.1110.10">
    <property type="entry name" value="RNA polymerase Rpb2, domain 2"/>
    <property type="match status" value="1"/>
</dbReference>
<dbReference type="HAMAP" id="MF_01321">
    <property type="entry name" value="RNApol_bact_RpoB"/>
    <property type="match status" value="1"/>
</dbReference>
<dbReference type="InterPro" id="IPR019462">
    <property type="entry name" value="DNA-dir_RNA_pol_bsu_external_1"/>
</dbReference>
<dbReference type="InterPro" id="IPR015712">
    <property type="entry name" value="DNA-dir_RNA_pol_su2"/>
</dbReference>
<dbReference type="InterPro" id="IPR007120">
    <property type="entry name" value="DNA-dir_RNAP_su2_dom"/>
</dbReference>
<dbReference type="InterPro" id="IPR037033">
    <property type="entry name" value="DNA-dir_RNAP_su2_hyb_sf"/>
</dbReference>
<dbReference type="InterPro" id="IPR010243">
    <property type="entry name" value="RNA_pol_bsu_bac"/>
</dbReference>
<dbReference type="InterPro" id="IPR007121">
    <property type="entry name" value="RNA_pol_bsu_CS"/>
</dbReference>
<dbReference type="InterPro" id="IPR007644">
    <property type="entry name" value="RNA_pol_bsu_protrusion"/>
</dbReference>
<dbReference type="InterPro" id="IPR007642">
    <property type="entry name" value="RNA_pol_Rpb2_2"/>
</dbReference>
<dbReference type="InterPro" id="IPR037034">
    <property type="entry name" value="RNA_pol_Rpb2_2_sf"/>
</dbReference>
<dbReference type="InterPro" id="IPR007645">
    <property type="entry name" value="RNA_pol_Rpb2_3"/>
</dbReference>
<dbReference type="InterPro" id="IPR007641">
    <property type="entry name" value="RNA_pol_Rpb2_7"/>
</dbReference>
<dbReference type="InterPro" id="IPR014724">
    <property type="entry name" value="RNA_pol_RPB2_OB-fold"/>
</dbReference>
<dbReference type="NCBIfam" id="NF001616">
    <property type="entry name" value="PRK00405.1"/>
    <property type="match status" value="1"/>
</dbReference>
<dbReference type="NCBIfam" id="TIGR02013">
    <property type="entry name" value="rpoB"/>
    <property type="match status" value="1"/>
</dbReference>
<dbReference type="PANTHER" id="PTHR20856">
    <property type="entry name" value="DNA-DIRECTED RNA POLYMERASE I SUBUNIT 2"/>
    <property type="match status" value="1"/>
</dbReference>
<dbReference type="Pfam" id="PF04563">
    <property type="entry name" value="RNA_pol_Rpb2_1"/>
    <property type="match status" value="1"/>
</dbReference>
<dbReference type="Pfam" id="PF04561">
    <property type="entry name" value="RNA_pol_Rpb2_2"/>
    <property type="match status" value="2"/>
</dbReference>
<dbReference type="Pfam" id="PF04565">
    <property type="entry name" value="RNA_pol_Rpb2_3"/>
    <property type="match status" value="1"/>
</dbReference>
<dbReference type="Pfam" id="PF10385">
    <property type="entry name" value="RNA_pol_Rpb2_45"/>
    <property type="match status" value="1"/>
</dbReference>
<dbReference type="Pfam" id="PF00562">
    <property type="entry name" value="RNA_pol_Rpb2_6"/>
    <property type="match status" value="1"/>
</dbReference>
<dbReference type="Pfam" id="PF04560">
    <property type="entry name" value="RNA_pol_Rpb2_7"/>
    <property type="match status" value="1"/>
</dbReference>
<dbReference type="SUPFAM" id="SSF64484">
    <property type="entry name" value="beta and beta-prime subunits of DNA dependent RNA-polymerase"/>
    <property type="match status" value="1"/>
</dbReference>
<dbReference type="PROSITE" id="PS01166">
    <property type="entry name" value="RNA_POL_BETA"/>
    <property type="match status" value="1"/>
</dbReference>